<proteinExistence type="inferred from homology"/>
<dbReference type="EMBL" id="CP000813">
    <property type="protein sequence ID" value="ABV60807.1"/>
    <property type="molecule type" value="Genomic_DNA"/>
</dbReference>
<dbReference type="RefSeq" id="WP_007496316.1">
    <property type="nucleotide sequence ID" value="NZ_VEIS01000020.1"/>
</dbReference>
<dbReference type="SMR" id="A8F990"/>
<dbReference type="STRING" id="315750.BPUM_0107"/>
<dbReference type="GeneID" id="66361738"/>
<dbReference type="KEGG" id="bpu:BPUM_0107"/>
<dbReference type="eggNOG" id="COG0091">
    <property type="taxonomic scope" value="Bacteria"/>
</dbReference>
<dbReference type="HOGENOM" id="CLU_083987_3_3_9"/>
<dbReference type="OrthoDB" id="9805969at2"/>
<dbReference type="Proteomes" id="UP000001355">
    <property type="component" value="Chromosome"/>
</dbReference>
<dbReference type="GO" id="GO:0022625">
    <property type="term" value="C:cytosolic large ribosomal subunit"/>
    <property type="evidence" value="ECO:0007669"/>
    <property type="project" value="TreeGrafter"/>
</dbReference>
<dbReference type="GO" id="GO:0019843">
    <property type="term" value="F:rRNA binding"/>
    <property type="evidence" value="ECO:0007669"/>
    <property type="project" value="UniProtKB-UniRule"/>
</dbReference>
<dbReference type="GO" id="GO:0003735">
    <property type="term" value="F:structural constituent of ribosome"/>
    <property type="evidence" value="ECO:0007669"/>
    <property type="project" value="InterPro"/>
</dbReference>
<dbReference type="GO" id="GO:0006412">
    <property type="term" value="P:translation"/>
    <property type="evidence" value="ECO:0007669"/>
    <property type="project" value="UniProtKB-UniRule"/>
</dbReference>
<dbReference type="CDD" id="cd00336">
    <property type="entry name" value="Ribosomal_L22"/>
    <property type="match status" value="1"/>
</dbReference>
<dbReference type="FunFam" id="3.90.470.10:FF:000001">
    <property type="entry name" value="50S ribosomal protein L22"/>
    <property type="match status" value="1"/>
</dbReference>
<dbReference type="Gene3D" id="3.90.470.10">
    <property type="entry name" value="Ribosomal protein L22/L17"/>
    <property type="match status" value="1"/>
</dbReference>
<dbReference type="HAMAP" id="MF_01331_B">
    <property type="entry name" value="Ribosomal_uL22_B"/>
    <property type="match status" value="1"/>
</dbReference>
<dbReference type="InterPro" id="IPR001063">
    <property type="entry name" value="Ribosomal_uL22"/>
</dbReference>
<dbReference type="InterPro" id="IPR005727">
    <property type="entry name" value="Ribosomal_uL22_bac/chlpt-type"/>
</dbReference>
<dbReference type="InterPro" id="IPR047867">
    <property type="entry name" value="Ribosomal_uL22_bac/org-type"/>
</dbReference>
<dbReference type="InterPro" id="IPR018260">
    <property type="entry name" value="Ribosomal_uL22_CS"/>
</dbReference>
<dbReference type="InterPro" id="IPR036394">
    <property type="entry name" value="Ribosomal_uL22_sf"/>
</dbReference>
<dbReference type="NCBIfam" id="TIGR01044">
    <property type="entry name" value="rplV_bact"/>
    <property type="match status" value="1"/>
</dbReference>
<dbReference type="PANTHER" id="PTHR13501">
    <property type="entry name" value="CHLOROPLAST 50S RIBOSOMAL PROTEIN L22-RELATED"/>
    <property type="match status" value="1"/>
</dbReference>
<dbReference type="PANTHER" id="PTHR13501:SF8">
    <property type="entry name" value="LARGE RIBOSOMAL SUBUNIT PROTEIN UL22M"/>
    <property type="match status" value="1"/>
</dbReference>
<dbReference type="Pfam" id="PF00237">
    <property type="entry name" value="Ribosomal_L22"/>
    <property type="match status" value="1"/>
</dbReference>
<dbReference type="SUPFAM" id="SSF54843">
    <property type="entry name" value="Ribosomal protein L22"/>
    <property type="match status" value="1"/>
</dbReference>
<dbReference type="PROSITE" id="PS00464">
    <property type="entry name" value="RIBOSOMAL_L22"/>
    <property type="match status" value="1"/>
</dbReference>
<protein>
    <recommendedName>
        <fullName evidence="1">Large ribosomal subunit protein uL22</fullName>
    </recommendedName>
    <alternativeName>
        <fullName evidence="2">50S ribosomal protein L22</fullName>
    </alternativeName>
</protein>
<gene>
    <name evidence="1" type="primary">rplV</name>
    <name type="ordered locus">BPUM_0107</name>
</gene>
<accession>A8F990</accession>
<sequence>MQAKAVARTVRIAPRKARLVMDLIRGKQVGEAVSILNLTPKAASPIIEKVLKSAIANAEHNYELDANSLVITQAFVDEGPTLKRFRPRAMGRASAINKRTSHITIVVSEKKEG</sequence>
<reference key="1">
    <citation type="journal article" date="2007" name="PLoS ONE">
        <title>Paradoxical DNA repair and peroxide resistance gene conservation in Bacillus pumilus SAFR-032.</title>
        <authorList>
            <person name="Gioia J."/>
            <person name="Yerrapragada S."/>
            <person name="Qin X."/>
            <person name="Jiang H."/>
            <person name="Igboeli O.C."/>
            <person name="Muzny D."/>
            <person name="Dugan-Rocha S."/>
            <person name="Ding Y."/>
            <person name="Hawes A."/>
            <person name="Liu W."/>
            <person name="Perez L."/>
            <person name="Kovar C."/>
            <person name="Dinh H."/>
            <person name="Lee S."/>
            <person name="Nazareth L."/>
            <person name="Blyth P."/>
            <person name="Holder M."/>
            <person name="Buhay C."/>
            <person name="Tirumalai M.R."/>
            <person name="Liu Y."/>
            <person name="Dasgupta I."/>
            <person name="Bokhetache L."/>
            <person name="Fujita M."/>
            <person name="Karouia F."/>
            <person name="Eswara Moorthy P."/>
            <person name="Siefert J."/>
            <person name="Uzman A."/>
            <person name="Buzumbo P."/>
            <person name="Verma A."/>
            <person name="Zwiya H."/>
            <person name="McWilliams B.D."/>
            <person name="Olowu A."/>
            <person name="Clinkenbeard K.D."/>
            <person name="Newcombe D."/>
            <person name="Golebiewski L."/>
            <person name="Petrosino J.F."/>
            <person name="Nicholson W.L."/>
            <person name="Fox G.E."/>
            <person name="Venkateswaran K."/>
            <person name="Highlander S.K."/>
            <person name="Weinstock G.M."/>
        </authorList>
    </citation>
    <scope>NUCLEOTIDE SEQUENCE [LARGE SCALE GENOMIC DNA]</scope>
    <source>
        <strain>SAFR-032</strain>
    </source>
</reference>
<organism>
    <name type="scientific">Bacillus pumilus (strain SAFR-032)</name>
    <dbReference type="NCBI Taxonomy" id="315750"/>
    <lineage>
        <taxon>Bacteria</taxon>
        <taxon>Bacillati</taxon>
        <taxon>Bacillota</taxon>
        <taxon>Bacilli</taxon>
        <taxon>Bacillales</taxon>
        <taxon>Bacillaceae</taxon>
        <taxon>Bacillus</taxon>
    </lineage>
</organism>
<name>RL22_BACP2</name>
<keyword id="KW-0687">Ribonucleoprotein</keyword>
<keyword id="KW-0689">Ribosomal protein</keyword>
<keyword id="KW-0694">RNA-binding</keyword>
<keyword id="KW-0699">rRNA-binding</keyword>
<comment type="function">
    <text evidence="1">This protein binds specifically to 23S rRNA; its binding is stimulated by other ribosomal proteins, e.g. L4, L17, and L20. It is important during the early stages of 50S assembly. It makes multiple contacts with different domains of the 23S rRNA in the assembled 50S subunit and ribosome (By similarity).</text>
</comment>
<comment type="function">
    <text evidence="1">The globular domain of the protein is located near the polypeptide exit tunnel on the outside of the subunit, while an extended beta-hairpin is found that lines the wall of the exit tunnel in the center of the 70S ribosome.</text>
</comment>
<comment type="subunit">
    <text evidence="1">Part of the 50S ribosomal subunit.</text>
</comment>
<comment type="similarity">
    <text evidence="1">Belongs to the universal ribosomal protein uL22 family.</text>
</comment>
<feature type="chain" id="PRO_1000067607" description="Large ribosomal subunit protein uL22">
    <location>
        <begin position="1"/>
        <end position="113"/>
    </location>
</feature>
<evidence type="ECO:0000255" key="1">
    <source>
        <dbReference type="HAMAP-Rule" id="MF_01331"/>
    </source>
</evidence>
<evidence type="ECO:0000305" key="2"/>